<dbReference type="EMBL" id="CP000262">
    <property type="protein sequence ID" value="ABF37015.1"/>
    <property type="molecule type" value="Genomic_DNA"/>
</dbReference>
<dbReference type="SMR" id="Q1J8Z6"/>
<dbReference type="KEGG" id="spi:MGAS10750_Spy0065"/>
<dbReference type="HOGENOM" id="CLU_065898_2_2_9"/>
<dbReference type="Proteomes" id="UP000002434">
    <property type="component" value="Chromosome"/>
</dbReference>
<dbReference type="GO" id="GO:0015935">
    <property type="term" value="C:small ribosomal subunit"/>
    <property type="evidence" value="ECO:0007669"/>
    <property type="project" value="InterPro"/>
</dbReference>
<dbReference type="GO" id="GO:0019843">
    <property type="term" value="F:rRNA binding"/>
    <property type="evidence" value="ECO:0007669"/>
    <property type="project" value="UniProtKB-UniRule"/>
</dbReference>
<dbReference type="GO" id="GO:0003735">
    <property type="term" value="F:structural constituent of ribosome"/>
    <property type="evidence" value="ECO:0007669"/>
    <property type="project" value="InterPro"/>
</dbReference>
<dbReference type="GO" id="GO:0006412">
    <property type="term" value="P:translation"/>
    <property type="evidence" value="ECO:0007669"/>
    <property type="project" value="UniProtKB-UniRule"/>
</dbReference>
<dbReference type="FunFam" id="3.30.160.20:FF:000001">
    <property type="entry name" value="30S ribosomal protein S5"/>
    <property type="match status" value="1"/>
</dbReference>
<dbReference type="FunFam" id="3.30.230.10:FF:000002">
    <property type="entry name" value="30S ribosomal protein S5"/>
    <property type="match status" value="1"/>
</dbReference>
<dbReference type="Gene3D" id="3.30.160.20">
    <property type="match status" value="1"/>
</dbReference>
<dbReference type="Gene3D" id="3.30.230.10">
    <property type="match status" value="1"/>
</dbReference>
<dbReference type="HAMAP" id="MF_01307_B">
    <property type="entry name" value="Ribosomal_uS5_B"/>
    <property type="match status" value="1"/>
</dbReference>
<dbReference type="InterPro" id="IPR020568">
    <property type="entry name" value="Ribosomal_Su5_D2-typ_SF"/>
</dbReference>
<dbReference type="InterPro" id="IPR000851">
    <property type="entry name" value="Ribosomal_uS5"/>
</dbReference>
<dbReference type="InterPro" id="IPR005712">
    <property type="entry name" value="Ribosomal_uS5_bac-type"/>
</dbReference>
<dbReference type="InterPro" id="IPR005324">
    <property type="entry name" value="Ribosomal_uS5_C"/>
</dbReference>
<dbReference type="InterPro" id="IPR013810">
    <property type="entry name" value="Ribosomal_uS5_N"/>
</dbReference>
<dbReference type="InterPro" id="IPR018192">
    <property type="entry name" value="Ribosomal_uS5_N_CS"/>
</dbReference>
<dbReference type="InterPro" id="IPR014721">
    <property type="entry name" value="Ribsml_uS5_D2-typ_fold_subgr"/>
</dbReference>
<dbReference type="NCBIfam" id="TIGR01021">
    <property type="entry name" value="rpsE_bact"/>
    <property type="match status" value="1"/>
</dbReference>
<dbReference type="PANTHER" id="PTHR48277">
    <property type="entry name" value="MITOCHONDRIAL RIBOSOMAL PROTEIN S5"/>
    <property type="match status" value="1"/>
</dbReference>
<dbReference type="PANTHER" id="PTHR48277:SF1">
    <property type="entry name" value="MITOCHONDRIAL RIBOSOMAL PROTEIN S5"/>
    <property type="match status" value="1"/>
</dbReference>
<dbReference type="Pfam" id="PF00333">
    <property type="entry name" value="Ribosomal_S5"/>
    <property type="match status" value="1"/>
</dbReference>
<dbReference type="Pfam" id="PF03719">
    <property type="entry name" value="Ribosomal_S5_C"/>
    <property type="match status" value="1"/>
</dbReference>
<dbReference type="SUPFAM" id="SSF54768">
    <property type="entry name" value="dsRNA-binding domain-like"/>
    <property type="match status" value="1"/>
</dbReference>
<dbReference type="SUPFAM" id="SSF54211">
    <property type="entry name" value="Ribosomal protein S5 domain 2-like"/>
    <property type="match status" value="1"/>
</dbReference>
<dbReference type="PROSITE" id="PS00585">
    <property type="entry name" value="RIBOSOMAL_S5"/>
    <property type="match status" value="1"/>
</dbReference>
<dbReference type="PROSITE" id="PS50881">
    <property type="entry name" value="S5_DSRBD"/>
    <property type="match status" value="1"/>
</dbReference>
<feature type="chain" id="PRO_0000323210" description="Small ribosomal subunit protein uS5">
    <location>
        <begin position="1"/>
        <end position="164"/>
    </location>
</feature>
<feature type="domain" description="S5 DRBM" evidence="1">
    <location>
        <begin position="10"/>
        <end position="73"/>
    </location>
</feature>
<proteinExistence type="inferred from homology"/>
<accession>Q1J8Z6</accession>
<keyword id="KW-0687">Ribonucleoprotein</keyword>
<keyword id="KW-0689">Ribosomal protein</keyword>
<keyword id="KW-0694">RNA-binding</keyword>
<keyword id="KW-0699">rRNA-binding</keyword>
<name>RS5_STRPF</name>
<organism>
    <name type="scientific">Streptococcus pyogenes serotype M4 (strain MGAS10750)</name>
    <dbReference type="NCBI Taxonomy" id="370554"/>
    <lineage>
        <taxon>Bacteria</taxon>
        <taxon>Bacillati</taxon>
        <taxon>Bacillota</taxon>
        <taxon>Bacilli</taxon>
        <taxon>Lactobacillales</taxon>
        <taxon>Streptococcaceae</taxon>
        <taxon>Streptococcus</taxon>
    </lineage>
</organism>
<evidence type="ECO:0000255" key="1">
    <source>
        <dbReference type="HAMAP-Rule" id="MF_01307"/>
    </source>
</evidence>
<evidence type="ECO:0000305" key="2"/>
<reference key="1">
    <citation type="journal article" date="2006" name="Proc. Natl. Acad. Sci. U.S.A.">
        <title>Molecular genetic anatomy of inter- and intraserotype variation in the human bacterial pathogen group A Streptococcus.</title>
        <authorList>
            <person name="Beres S.B."/>
            <person name="Richter E.W."/>
            <person name="Nagiec M.J."/>
            <person name="Sumby P."/>
            <person name="Porcella S.F."/>
            <person name="DeLeo F.R."/>
            <person name="Musser J.M."/>
        </authorList>
    </citation>
    <scope>NUCLEOTIDE SEQUENCE [LARGE SCALE GENOMIC DNA]</scope>
    <source>
        <strain>MGAS10750</strain>
    </source>
</reference>
<sequence length="164" mass="17028">MAFKDNAVELEERVVAINRVTKVVKGGRRLRFAALVVVGDGNGRVGFGTGKAQEVPEAIRKAVEAAKKNMIEVPMVGTTIPHEVYTNFGGAKVLLKPAVEGSGVAAGGAVRAVIELAGVADITSKSLGSNTPINIVRATVEGLKQLKRAEEVAALRGISVSDLA</sequence>
<protein>
    <recommendedName>
        <fullName evidence="1">Small ribosomal subunit protein uS5</fullName>
    </recommendedName>
    <alternativeName>
        <fullName evidence="2">30S ribosomal protein S5</fullName>
    </alternativeName>
</protein>
<comment type="function">
    <text evidence="1">With S4 and S12 plays an important role in translational accuracy.</text>
</comment>
<comment type="function">
    <text evidence="1">Located at the back of the 30S subunit body where it stabilizes the conformation of the head with respect to the body.</text>
</comment>
<comment type="subunit">
    <text evidence="1">Part of the 30S ribosomal subunit. Contacts proteins S4 and S8.</text>
</comment>
<comment type="domain">
    <text>The N-terminal domain interacts with the head of the 30S subunit; the C-terminal domain interacts with the body and contacts protein S4. The interaction surface between S4 and S5 is involved in control of translational fidelity.</text>
</comment>
<comment type="similarity">
    <text evidence="1">Belongs to the universal ribosomal protein uS5 family.</text>
</comment>
<gene>
    <name evidence="1" type="primary">rpsE</name>
    <name type="ordered locus">MGAS10750_Spy0065</name>
</gene>